<proteinExistence type="evidence at protein level"/>
<dbReference type="EMBL" id="Z84820">
    <property type="protein sequence ID" value="CAB06618.1"/>
    <property type="molecule type" value="mRNA"/>
</dbReference>
<dbReference type="PIR" id="T04086">
    <property type="entry name" value="T04086"/>
</dbReference>
<dbReference type="SMR" id="P93397"/>
<dbReference type="IntAct" id="P93397">
    <property type="interactions" value="3"/>
</dbReference>
<dbReference type="STRING" id="4097.P93397"/>
<dbReference type="PaxDb" id="4097-P93397"/>
<dbReference type="Proteomes" id="UP000084051">
    <property type="component" value="Unplaced"/>
</dbReference>
<dbReference type="GO" id="GO:0005737">
    <property type="term" value="C:cytoplasm"/>
    <property type="evidence" value="ECO:0000318"/>
    <property type="project" value="GO_Central"/>
</dbReference>
<dbReference type="GO" id="GO:0005834">
    <property type="term" value="C:heterotrimeric G-protein complex"/>
    <property type="evidence" value="ECO:0000318"/>
    <property type="project" value="GO_Central"/>
</dbReference>
<dbReference type="GO" id="GO:0030159">
    <property type="term" value="F:signaling receptor complex adaptor activity"/>
    <property type="evidence" value="ECO:0000318"/>
    <property type="project" value="GO_Central"/>
</dbReference>
<dbReference type="GO" id="GO:0007186">
    <property type="term" value="P:G protein-coupled receptor signaling pathway"/>
    <property type="evidence" value="ECO:0000318"/>
    <property type="project" value="GO_Central"/>
</dbReference>
<dbReference type="CDD" id="cd00200">
    <property type="entry name" value="WD40"/>
    <property type="match status" value="1"/>
</dbReference>
<dbReference type="FunFam" id="2.130.10.10:FF:000580">
    <property type="entry name" value="Guanine nucleotide-binding protein subunit beta"/>
    <property type="match status" value="1"/>
</dbReference>
<dbReference type="Gene3D" id="2.130.10.10">
    <property type="entry name" value="YVTN repeat-like/Quinoprotein amine dehydrogenase"/>
    <property type="match status" value="1"/>
</dbReference>
<dbReference type="InterPro" id="IPR020472">
    <property type="entry name" value="G-protein_beta_WD-40_rep"/>
</dbReference>
<dbReference type="InterPro" id="IPR001632">
    <property type="entry name" value="Gprotein_B"/>
</dbReference>
<dbReference type="InterPro" id="IPR016346">
    <property type="entry name" value="Guanine_nucleotide-bd_bsu"/>
</dbReference>
<dbReference type="InterPro" id="IPR015943">
    <property type="entry name" value="WD40/YVTN_repeat-like_dom_sf"/>
</dbReference>
<dbReference type="InterPro" id="IPR019775">
    <property type="entry name" value="WD40_repeat_CS"/>
</dbReference>
<dbReference type="InterPro" id="IPR036322">
    <property type="entry name" value="WD40_repeat_dom_sf"/>
</dbReference>
<dbReference type="InterPro" id="IPR001680">
    <property type="entry name" value="WD40_rpt"/>
</dbReference>
<dbReference type="PANTHER" id="PTHR19850">
    <property type="entry name" value="GUANINE NUCLEOTIDE-BINDING PROTEIN BETA G PROTEIN BETA"/>
    <property type="match status" value="1"/>
</dbReference>
<dbReference type="Pfam" id="PF25391">
    <property type="entry name" value="WD40_Gbeta"/>
    <property type="match status" value="1"/>
</dbReference>
<dbReference type="PIRSF" id="PIRSF002394">
    <property type="entry name" value="GN-bd_beta"/>
    <property type="match status" value="1"/>
</dbReference>
<dbReference type="PRINTS" id="PR00319">
    <property type="entry name" value="GPROTEINB"/>
</dbReference>
<dbReference type="PRINTS" id="PR00320">
    <property type="entry name" value="GPROTEINBRPT"/>
</dbReference>
<dbReference type="SMART" id="SM00320">
    <property type="entry name" value="WD40"/>
    <property type="match status" value="7"/>
</dbReference>
<dbReference type="SUPFAM" id="SSF50978">
    <property type="entry name" value="WD40 repeat-like"/>
    <property type="match status" value="1"/>
</dbReference>
<dbReference type="PROSITE" id="PS00678">
    <property type="entry name" value="WD_REPEATS_1"/>
    <property type="match status" value="2"/>
</dbReference>
<dbReference type="PROSITE" id="PS50082">
    <property type="entry name" value="WD_REPEATS_2"/>
    <property type="match status" value="5"/>
</dbReference>
<dbReference type="PROSITE" id="PS50294">
    <property type="entry name" value="WD_REPEATS_REGION"/>
    <property type="match status" value="1"/>
</dbReference>
<protein>
    <recommendedName>
        <fullName>Guanine nucleotide-binding protein subunit beta-1</fullName>
    </recommendedName>
</protein>
<name>GBB1_TOBAC</name>
<sequence>MSVTELKERHMAATQTVNDLREKLKQKRLQLLDTDVSGYARSQGKTPVTFGPTDLVCCRILQGHTGKVYSLDWTPEKNRIVSASQDGRLIVWNALTSQKTHAIKLPCAWVMTCAFSPSGQSVACGGLDSVCSIFNLNSPIDKDGNHPVSRMLSGHKGYVSSCQYVPDEDTHLITSSGDQTCVLWDITTGLRTSVFGGEFQSGHTADVQSVSISSSNPRLFVSGSCDTTARLWDTRVASRAQRTFYGHEGDVNTVKFFPDGNRFGTGSEDGTCRLFDIRTEHQLQVYYQPHGDGDIPHVTSMAFSISGRLLFVGYSNGDCYVWDTLLAKVVLNLGGVQNSHEGRISCLGLSADGSALCTGSWDTNLKIWAFGGHRSVI</sequence>
<organism>
    <name type="scientific">Nicotiana tabacum</name>
    <name type="common">Common tobacco</name>
    <dbReference type="NCBI Taxonomy" id="4097"/>
    <lineage>
        <taxon>Eukaryota</taxon>
        <taxon>Viridiplantae</taxon>
        <taxon>Streptophyta</taxon>
        <taxon>Embryophyta</taxon>
        <taxon>Tracheophyta</taxon>
        <taxon>Spermatophyta</taxon>
        <taxon>Magnoliopsida</taxon>
        <taxon>eudicotyledons</taxon>
        <taxon>Gunneridae</taxon>
        <taxon>Pentapetalae</taxon>
        <taxon>asterids</taxon>
        <taxon>lamiids</taxon>
        <taxon>Solanales</taxon>
        <taxon>Solanaceae</taxon>
        <taxon>Nicotianoideae</taxon>
        <taxon>Nicotianeae</taxon>
        <taxon>Nicotiana</taxon>
    </lineage>
</organism>
<keyword id="KW-1185">Reference proteome</keyword>
<keyword id="KW-0677">Repeat</keyword>
<keyword id="KW-0807">Transducer</keyword>
<keyword id="KW-0853">WD repeat</keyword>
<reference key="1">
    <citation type="submission" date="1997-02" db="EMBL/GenBank/DDBJ databases">
        <authorList>
            <person name="Lein W."/>
            <person name="Saalbach G."/>
        </authorList>
    </citation>
    <scope>NUCLEOTIDE SEQUENCE [MRNA]</scope>
    <source>
        <strain>cv. SR1</strain>
        <tissue>Leaf</tissue>
    </source>
</reference>
<comment type="function">
    <text>Guanine nucleotide-binding proteins (G proteins) are involved as a modulator or transducer in various transmembrane signaling systems. The beta and gamma chains are required for the GTPase activity, for replacement of GDP by GTP, and for G protein-effector interaction.</text>
</comment>
<comment type="subunit">
    <text>G proteins are composed of 3 units, alpha, beta and gamma.</text>
</comment>
<comment type="interaction">
    <interactant intactId="EBI-1750986">
        <id>P93397</id>
    </interactant>
    <interactant intactId="EBI-1750878">
        <id>Q9FDX9</id>
        <label>GG1</label>
    </interactant>
    <organismsDiffer>true</organismsDiffer>
    <experiments>4</experiments>
</comment>
<comment type="similarity">
    <text evidence="1">Belongs to the WD repeat G protein beta family.</text>
</comment>
<accession>P93397</accession>
<feature type="chain" id="PRO_0000127727" description="Guanine nucleotide-binding protein subunit beta-1">
    <location>
        <begin position="1"/>
        <end position="377"/>
    </location>
</feature>
<feature type="repeat" description="WD 1">
    <location>
        <begin position="63"/>
        <end position="93"/>
    </location>
</feature>
<feature type="repeat" description="WD 2">
    <location>
        <begin position="105"/>
        <end position="135"/>
    </location>
</feature>
<feature type="repeat" description="WD 3">
    <location>
        <begin position="154"/>
        <end position="185"/>
    </location>
</feature>
<feature type="repeat" description="WD 4">
    <location>
        <begin position="202"/>
        <end position="233"/>
    </location>
</feature>
<feature type="repeat" description="WD 5">
    <location>
        <begin position="246"/>
        <end position="276"/>
    </location>
</feature>
<feature type="repeat" description="WD 6">
    <location>
        <begin position="293"/>
        <end position="323"/>
    </location>
</feature>
<feature type="repeat" description="WD 7">
    <location>
        <begin position="339"/>
        <end position="369"/>
    </location>
</feature>
<evidence type="ECO:0000305" key="1"/>